<sequence>MEENNQIVEKITRIVNPFIEEMNLSLVDVEYVQDGGYWYVRIFIENLNGDLNIEDCSKLSSKIEDKVEELIEHKFFLEVSSPGLERPLKKLEDYTRFIGEKITLHLKHKLDDKKQFKTIIKEVNGDNIIFLMDKKEVEIKFNEIRKANILFEFNDF</sequence>
<protein>
    <recommendedName>
        <fullName evidence="1">Ribosome maturation factor RimP</fullName>
    </recommendedName>
</protein>
<keyword id="KW-0963">Cytoplasm</keyword>
<keyword id="KW-1185">Reference proteome</keyword>
<keyword id="KW-0690">Ribosome biogenesis</keyword>
<comment type="function">
    <text evidence="1">Required for maturation of 30S ribosomal subunits.</text>
</comment>
<comment type="subcellular location">
    <subcellularLocation>
        <location evidence="1">Cytoplasm</location>
    </subcellularLocation>
</comment>
<comment type="similarity">
    <text evidence="1">Belongs to the RimP family.</text>
</comment>
<proteinExistence type="inferred from homology"/>
<evidence type="ECO:0000255" key="1">
    <source>
        <dbReference type="HAMAP-Rule" id="MF_01077"/>
    </source>
</evidence>
<feature type="chain" id="PRO_0000181873" description="Ribosome maturation factor RimP">
    <location>
        <begin position="1"/>
        <end position="156"/>
    </location>
</feature>
<organism>
    <name type="scientific">Fusobacterium nucleatum subsp. nucleatum (strain ATCC 25586 / DSM 15643 / BCRC 10681 / CIP 101130 / JCM 8532 / KCTC 2640 / LMG 13131 / VPI 4355)</name>
    <dbReference type="NCBI Taxonomy" id="190304"/>
    <lineage>
        <taxon>Bacteria</taxon>
        <taxon>Fusobacteriati</taxon>
        <taxon>Fusobacteriota</taxon>
        <taxon>Fusobacteriia</taxon>
        <taxon>Fusobacteriales</taxon>
        <taxon>Fusobacteriaceae</taxon>
        <taxon>Fusobacterium</taxon>
    </lineage>
</organism>
<dbReference type="EMBL" id="AE009951">
    <property type="protein sequence ID" value="AAL94113.1"/>
    <property type="molecule type" value="Genomic_DNA"/>
</dbReference>
<dbReference type="RefSeq" id="NP_602814.1">
    <property type="nucleotide sequence ID" value="NC_003454.1"/>
</dbReference>
<dbReference type="RefSeq" id="WP_011015988.1">
    <property type="nucleotide sequence ID" value="NZ_CP028101.1"/>
</dbReference>
<dbReference type="SMR" id="Q8RHJ4"/>
<dbReference type="FunCoup" id="Q8RHJ4">
    <property type="interactions" value="227"/>
</dbReference>
<dbReference type="STRING" id="190304.FN2023"/>
<dbReference type="PaxDb" id="190304-FN2023"/>
<dbReference type="EnsemblBacteria" id="AAL94113">
    <property type="protein sequence ID" value="AAL94113"/>
    <property type="gene ID" value="FN2023"/>
</dbReference>
<dbReference type="GeneID" id="79782970"/>
<dbReference type="KEGG" id="fnu:FN2023"/>
<dbReference type="PATRIC" id="fig|190304.8.peg.491"/>
<dbReference type="eggNOG" id="COG0779">
    <property type="taxonomic scope" value="Bacteria"/>
</dbReference>
<dbReference type="HOGENOM" id="CLU_070525_2_2_0"/>
<dbReference type="InParanoid" id="Q8RHJ4"/>
<dbReference type="BioCyc" id="FNUC190304:G1FZS-510-MONOMER"/>
<dbReference type="Proteomes" id="UP000002521">
    <property type="component" value="Chromosome"/>
</dbReference>
<dbReference type="GO" id="GO:0005829">
    <property type="term" value="C:cytosol"/>
    <property type="evidence" value="ECO:0000318"/>
    <property type="project" value="GO_Central"/>
</dbReference>
<dbReference type="GO" id="GO:0000028">
    <property type="term" value="P:ribosomal small subunit assembly"/>
    <property type="evidence" value="ECO:0000318"/>
    <property type="project" value="GO_Central"/>
</dbReference>
<dbReference type="GO" id="GO:0006412">
    <property type="term" value="P:translation"/>
    <property type="evidence" value="ECO:0000318"/>
    <property type="project" value="GO_Central"/>
</dbReference>
<dbReference type="CDD" id="cd01734">
    <property type="entry name" value="YlxS_C"/>
    <property type="match status" value="1"/>
</dbReference>
<dbReference type="FunFam" id="3.30.300.70:FF:000001">
    <property type="entry name" value="Ribosome maturation factor RimP"/>
    <property type="match status" value="1"/>
</dbReference>
<dbReference type="Gene3D" id="2.30.30.180">
    <property type="entry name" value="Ribosome maturation factor RimP, C-terminal domain"/>
    <property type="match status" value="1"/>
</dbReference>
<dbReference type="Gene3D" id="3.30.300.70">
    <property type="entry name" value="RimP-like superfamily, N-terminal"/>
    <property type="match status" value="1"/>
</dbReference>
<dbReference type="HAMAP" id="MF_01077">
    <property type="entry name" value="RimP"/>
    <property type="match status" value="1"/>
</dbReference>
<dbReference type="InterPro" id="IPR003728">
    <property type="entry name" value="Ribosome_maturation_RimP"/>
</dbReference>
<dbReference type="InterPro" id="IPR028998">
    <property type="entry name" value="RimP_C"/>
</dbReference>
<dbReference type="InterPro" id="IPR036847">
    <property type="entry name" value="RimP_C_sf"/>
</dbReference>
<dbReference type="InterPro" id="IPR028989">
    <property type="entry name" value="RimP_N"/>
</dbReference>
<dbReference type="InterPro" id="IPR035956">
    <property type="entry name" value="RimP_N_sf"/>
</dbReference>
<dbReference type="PANTHER" id="PTHR33867">
    <property type="entry name" value="RIBOSOME MATURATION FACTOR RIMP"/>
    <property type="match status" value="1"/>
</dbReference>
<dbReference type="PANTHER" id="PTHR33867:SF1">
    <property type="entry name" value="RIBOSOME MATURATION FACTOR RIMP"/>
    <property type="match status" value="1"/>
</dbReference>
<dbReference type="Pfam" id="PF17384">
    <property type="entry name" value="DUF150_C"/>
    <property type="match status" value="1"/>
</dbReference>
<dbReference type="Pfam" id="PF02576">
    <property type="entry name" value="RimP_N"/>
    <property type="match status" value="1"/>
</dbReference>
<dbReference type="SUPFAM" id="SSF74942">
    <property type="entry name" value="YhbC-like, C-terminal domain"/>
    <property type="match status" value="1"/>
</dbReference>
<dbReference type="SUPFAM" id="SSF75420">
    <property type="entry name" value="YhbC-like, N-terminal domain"/>
    <property type="match status" value="1"/>
</dbReference>
<gene>
    <name evidence="1" type="primary">rimP</name>
    <name type="ordered locus">FN2023</name>
</gene>
<name>RIMP_FUSNN</name>
<accession>Q8RHJ4</accession>
<reference key="1">
    <citation type="journal article" date="2002" name="J. Bacteriol.">
        <title>Genome sequence and analysis of the oral bacterium Fusobacterium nucleatum strain ATCC 25586.</title>
        <authorList>
            <person name="Kapatral V."/>
            <person name="Anderson I."/>
            <person name="Ivanova N."/>
            <person name="Reznik G."/>
            <person name="Los T."/>
            <person name="Lykidis A."/>
            <person name="Bhattacharyya A."/>
            <person name="Bartman A."/>
            <person name="Gardner W."/>
            <person name="Grechkin G."/>
            <person name="Zhu L."/>
            <person name="Vasieva O."/>
            <person name="Chu L."/>
            <person name="Kogan Y."/>
            <person name="Chaga O."/>
            <person name="Goltsman E."/>
            <person name="Bernal A."/>
            <person name="Larsen N."/>
            <person name="D'Souza M."/>
            <person name="Walunas T."/>
            <person name="Pusch G."/>
            <person name="Haselkorn R."/>
            <person name="Fonstein M."/>
            <person name="Kyrpides N.C."/>
            <person name="Overbeek R."/>
        </authorList>
    </citation>
    <scope>NUCLEOTIDE SEQUENCE [LARGE SCALE GENOMIC DNA]</scope>
    <source>
        <strain>ATCC 25586 / DSM 15643 / BCRC 10681 / CIP 101130 / JCM 8532 / KCTC 2640 / LMG 13131 / VPI 4355</strain>
    </source>
</reference>